<dbReference type="EMBL" id="AE017143">
    <property type="protein sequence ID" value="AAP95171.1"/>
    <property type="molecule type" value="Genomic_DNA"/>
</dbReference>
<dbReference type="RefSeq" id="WP_010944225.1">
    <property type="nucleotide sequence ID" value="NC_002940.2"/>
</dbReference>
<dbReference type="SMR" id="Q7VPB1"/>
<dbReference type="STRING" id="233412.HD_0178"/>
<dbReference type="KEGG" id="hdu:HD_0178"/>
<dbReference type="eggNOG" id="COG3120">
    <property type="taxonomic scope" value="Bacteria"/>
</dbReference>
<dbReference type="HOGENOM" id="CLU_142157_0_0_6"/>
<dbReference type="OrthoDB" id="5814691at2"/>
<dbReference type="Proteomes" id="UP000001022">
    <property type="component" value="Chromosome"/>
</dbReference>
<dbReference type="GO" id="GO:0005737">
    <property type="term" value="C:cytoplasm"/>
    <property type="evidence" value="ECO:0007669"/>
    <property type="project" value="UniProtKB-SubCell"/>
</dbReference>
<dbReference type="GO" id="GO:0043565">
    <property type="term" value="F:sequence-specific DNA binding"/>
    <property type="evidence" value="ECO:0007669"/>
    <property type="project" value="UniProtKB-UniRule"/>
</dbReference>
<dbReference type="GO" id="GO:0051301">
    <property type="term" value="P:cell division"/>
    <property type="evidence" value="ECO:0007669"/>
    <property type="project" value="UniProtKB-UniRule"/>
</dbReference>
<dbReference type="GO" id="GO:0006355">
    <property type="term" value="P:regulation of DNA-templated transcription"/>
    <property type="evidence" value="ECO:0007669"/>
    <property type="project" value="InterPro"/>
</dbReference>
<dbReference type="Gene3D" id="1.20.1270.380">
    <property type="entry name" value="MatP, N-terminal domain"/>
    <property type="match status" value="1"/>
</dbReference>
<dbReference type="Gene3D" id="1.10.1220.10">
    <property type="entry name" value="Met repressor-like"/>
    <property type="match status" value="1"/>
</dbReference>
<dbReference type="HAMAP" id="MF_01073">
    <property type="entry name" value="MatP"/>
    <property type="match status" value="1"/>
</dbReference>
<dbReference type="InterPro" id="IPR013321">
    <property type="entry name" value="Arc_rbn_hlx_hlx"/>
</dbReference>
<dbReference type="InterPro" id="IPR009390">
    <property type="entry name" value="MatP"/>
</dbReference>
<dbReference type="InterPro" id="IPR035375">
    <property type="entry name" value="MatP_C"/>
</dbReference>
<dbReference type="InterPro" id="IPR035087">
    <property type="entry name" value="MatP_N"/>
</dbReference>
<dbReference type="InterPro" id="IPR038339">
    <property type="entry name" value="MatP_N_sf"/>
</dbReference>
<dbReference type="NCBIfam" id="NF003471">
    <property type="entry name" value="PRK05097.1"/>
    <property type="match status" value="1"/>
</dbReference>
<dbReference type="Pfam" id="PF06303">
    <property type="entry name" value="MatP"/>
    <property type="match status" value="1"/>
</dbReference>
<dbReference type="Pfam" id="PF17414">
    <property type="entry name" value="MatP_C"/>
    <property type="match status" value="1"/>
</dbReference>
<reference key="1">
    <citation type="submission" date="2003-06" db="EMBL/GenBank/DDBJ databases">
        <title>The complete genome sequence of Haemophilus ducreyi.</title>
        <authorList>
            <person name="Munson R.S. Jr."/>
            <person name="Ray W.C."/>
            <person name="Mahairas G."/>
            <person name="Sabo P."/>
            <person name="Mungur R."/>
            <person name="Johnson L."/>
            <person name="Nguyen D."/>
            <person name="Wang J."/>
            <person name="Forst C."/>
            <person name="Hood L."/>
        </authorList>
    </citation>
    <scope>NUCLEOTIDE SEQUENCE [LARGE SCALE GENOMIC DNA]</scope>
    <source>
        <strain>35000HP / ATCC 700724</strain>
    </source>
</reference>
<accession>Q7VPB1</accession>
<proteinExistence type="inferred from homology"/>
<organism>
    <name type="scientific">Haemophilus ducreyi (strain 35000HP / ATCC 700724)</name>
    <dbReference type="NCBI Taxonomy" id="233412"/>
    <lineage>
        <taxon>Bacteria</taxon>
        <taxon>Pseudomonadati</taxon>
        <taxon>Pseudomonadota</taxon>
        <taxon>Gammaproteobacteria</taxon>
        <taxon>Pasteurellales</taxon>
        <taxon>Pasteurellaceae</taxon>
        <taxon>Haemophilus</taxon>
    </lineage>
</organism>
<sequence>MRYQKLEIQEANWQWKYLLKKHREGENITKHTEQSLIELKVQFLTTLQHSPAEIEQWIKAEMTAEQRKRMRQSIRAKRKRFFNAEKLTTKKKSIDLDYASWLRLSKYSKTHAMTLSETINHLIDERENQHLYSEQMAKMKASLKDLLK</sequence>
<keyword id="KW-0131">Cell cycle</keyword>
<keyword id="KW-0132">Cell division</keyword>
<keyword id="KW-0963">Cytoplasm</keyword>
<keyword id="KW-0238">DNA-binding</keyword>
<keyword id="KW-1185">Reference proteome</keyword>
<feature type="chain" id="PRO_0000070350" description="Macrodomain Ter protein">
    <location>
        <begin position="1"/>
        <end position="148"/>
    </location>
</feature>
<comment type="function">
    <text evidence="1">Required for spatial organization of the terminus region of the chromosome (Ter macrodomain) during the cell cycle. Prevents early segregation of duplicated Ter macrodomains during cell division. Binds specifically to matS, which is a 13 bp signature motif repeated within the Ter macrodomain.</text>
</comment>
<comment type="subunit">
    <text evidence="1">Homodimer.</text>
</comment>
<comment type="subcellular location">
    <subcellularLocation>
        <location evidence="1">Cytoplasm</location>
    </subcellularLocation>
</comment>
<comment type="similarity">
    <text evidence="1">Belongs to the MatP family.</text>
</comment>
<evidence type="ECO:0000255" key="1">
    <source>
        <dbReference type="HAMAP-Rule" id="MF_01073"/>
    </source>
</evidence>
<gene>
    <name evidence="1" type="primary">matP</name>
    <name type="ordered locus">HD_0178</name>
</gene>
<protein>
    <recommendedName>
        <fullName evidence="1">Macrodomain Ter protein</fullName>
    </recommendedName>
</protein>
<name>MATP_HAEDU</name>